<name>FSA_SALPC</name>
<sequence length="220" mass="23525">MELYLDTANVAEVERLARIFPIAGVTTNPSIVAASKESIWDVLPRLQNAIGEEGTLFAQTMSRDAKGMVEEAKRLNNAIPGIVVKIPVTAEGLAAIKLLKKEGIVTLGTAVYSASQGLLAALAGAKYVAPYVNRVDAQGGDGIRMVQELQTLLEHHAPDSMVLAASFKTPRQALDCLLAGCQAITLPLDVAQQMLNTPAVESAIEKFEQDWKNAFGNLNL</sequence>
<comment type="function">
    <text evidence="1">Catalyzes the reversible formation of fructose 6-phosphate from dihydroxyacetone and D-glyceraldehyde 3-phosphate via an aldolization reaction.</text>
</comment>
<comment type="catalytic activity">
    <reaction evidence="1">
        <text>beta-D-fructose 6-phosphate = dihydroxyacetone + D-glyceraldehyde 3-phosphate</text>
        <dbReference type="Rhea" id="RHEA:28002"/>
        <dbReference type="ChEBI" id="CHEBI:16016"/>
        <dbReference type="ChEBI" id="CHEBI:57634"/>
        <dbReference type="ChEBI" id="CHEBI:59776"/>
    </reaction>
</comment>
<comment type="subunit">
    <text evidence="1">Homodecamer.</text>
</comment>
<comment type="subcellular location">
    <subcellularLocation>
        <location evidence="1">Cytoplasm</location>
    </subcellularLocation>
</comment>
<comment type="similarity">
    <text evidence="1">Belongs to the transaldolase family. Type 3A subfamily.</text>
</comment>
<gene>
    <name evidence="1" type="primary">fsa</name>
    <name type="ordered locus">SPC_4219</name>
</gene>
<evidence type="ECO:0000255" key="1">
    <source>
        <dbReference type="HAMAP-Rule" id="MF_00496"/>
    </source>
</evidence>
<keyword id="KW-0119">Carbohydrate metabolism</keyword>
<keyword id="KW-0963">Cytoplasm</keyword>
<keyword id="KW-0456">Lyase</keyword>
<keyword id="KW-0704">Schiff base</keyword>
<proteinExistence type="inferred from homology"/>
<feature type="chain" id="PRO_1000198461" description="Fructose-6-phosphate aldolase">
    <location>
        <begin position="1"/>
        <end position="220"/>
    </location>
</feature>
<feature type="active site" description="Schiff-base intermediate with substrate" evidence="1">
    <location>
        <position position="85"/>
    </location>
</feature>
<accession>C0Q463</accession>
<dbReference type="EC" id="4.1.2.-" evidence="1"/>
<dbReference type="EMBL" id="CP000857">
    <property type="protein sequence ID" value="ACN48282.1"/>
    <property type="molecule type" value="Genomic_DNA"/>
</dbReference>
<dbReference type="RefSeq" id="WP_000424866.1">
    <property type="nucleotide sequence ID" value="NC_012125.1"/>
</dbReference>
<dbReference type="SMR" id="C0Q463"/>
<dbReference type="KEGG" id="sei:SPC_4219"/>
<dbReference type="HOGENOM" id="CLU_079764_2_0_6"/>
<dbReference type="Proteomes" id="UP000001599">
    <property type="component" value="Chromosome"/>
</dbReference>
<dbReference type="GO" id="GO:0005737">
    <property type="term" value="C:cytoplasm"/>
    <property type="evidence" value="ECO:0007669"/>
    <property type="project" value="UniProtKB-SubCell"/>
</dbReference>
<dbReference type="GO" id="GO:0097023">
    <property type="term" value="F:fructose 6-phosphate aldolase activity"/>
    <property type="evidence" value="ECO:0007669"/>
    <property type="project" value="RHEA"/>
</dbReference>
<dbReference type="GO" id="GO:0006000">
    <property type="term" value="P:fructose metabolic process"/>
    <property type="evidence" value="ECO:0007669"/>
    <property type="project" value="UniProtKB-UniRule"/>
</dbReference>
<dbReference type="CDD" id="cd00956">
    <property type="entry name" value="Transaldolase_FSA"/>
    <property type="match status" value="1"/>
</dbReference>
<dbReference type="FunFam" id="3.20.20.70:FF:000018">
    <property type="entry name" value="Probable transaldolase"/>
    <property type="match status" value="1"/>
</dbReference>
<dbReference type="Gene3D" id="3.20.20.70">
    <property type="entry name" value="Aldolase class I"/>
    <property type="match status" value="1"/>
</dbReference>
<dbReference type="HAMAP" id="MF_00496">
    <property type="entry name" value="F6P_aldolase"/>
    <property type="match status" value="1"/>
</dbReference>
<dbReference type="InterPro" id="IPR013785">
    <property type="entry name" value="Aldolase_TIM"/>
</dbReference>
<dbReference type="InterPro" id="IPR023001">
    <property type="entry name" value="F6P_aldolase"/>
</dbReference>
<dbReference type="InterPro" id="IPR001585">
    <property type="entry name" value="TAL/FSA"/>
</dbReference>
<dbReference type="InterPro" id="IPR004731">
    <property type="entry name" value="Transaldolase_3B/F6P_aldolase"/>
</dbReference>
<dbReference type="InterPro" id="IPR018225">
    <property type="entry name" value="Transaldolase_AS"/>
</dbReference>
<dbReference type="InterPro" id="IPR033919">
    <property type="entry name" value="TSA/FSA_arc/bac"/>
</dbReference>
<dbReference type="NCBIfam" id="TIGR00875">
    <property type="entry name" value="fsa_talC_mipB"/>
    <property type="match status" value="1"/>
</dbReference>
<dbReference type="NCBIfam" id="NF009296">
    <property type="entry name" value="PRK12653.1"/>
    <property type="match status" value="1"/>
</dbReference>
<dbReference type="PANTHER" id="PTHR10683:SF40">
    <property type="entry name" value="FRUCTOSE-6-PHOSPHATE ALDOLASE 1-RELATED"/>
    <property type="match status" value="1"/>
</dbReference>
<dbReference type="PANTHER" id="PTHR10683">
    <property type="entry name" value="TRANSALDOLASE"/>
    <property type="match status" value="1"/>
</dbReference>
<dbReference type="Pfam" id="PF00923">
    <property type="entry name" value="TAL_FSA"/>
    <property type="match status" value="1"/>
</dbReference>
<dbReference type="SUPFAM" id="SSF51569">
    <property type="entry name" value="Aldolase"/>
    <property type="match status" value="1"/>
</dbReference>
<dbReference type="PROSITE" id="PS01054">
    <property type="entry name" value="TRANSALDOLASE_1"/>
    <property type="match status" value="1"/>
</dbReference>
<dbReference type="PROSITE" id="PS00958">
    <property type="entry name" value="TRANSALDOLASE_2"/>
    <property type="match status" value="1"/>
</dbReference>
<organism>
    <name type="scientific">Salmonella paratyphi C (strain RKS4594)</name>
    <dbReference type="NCBI Taxonomy" id="476213"/>
    <lineage>
        <taxon>Bacteria</taxon>
        <taxon>Pseudomonadati</taxon>
        <taxon>Pseudomonadota</taxon>
        <taxon>Gammaproteobacteria</taxon>
        <taxon>Enterobacterales</taxon>
        <taxon>Enterobacteriaceae</taxon>
        <taxon>Salmonella</taxon>
    </lineage>
</organism>
<reference key="1">
    <citation type="journal article" date="2009" name="PLoS ONE">
        <title>Salmonella paratyphi C: genetic divergence from Salmonella choleraesuis and pathogenic convergence with Salmonella typhi.</title>
        <authorList>
            <person name="Liu W.-Q."/>
            <person name="Feng Y."/>
            <person name="Wang Y."/>
            <person name="Zou Q.-H."/>
            <person name="Chen F."/>
            <person name="Guo J.-T."/>
            <person name="Peng Y.-H."/>
            <person name="Jin Y."/>
            <person name="Li Y.-G."/>
            <person name="Hu S.-N."/>
            <person name="Johnston R.N."/>
            <person name="Liu G.-R."/>
            <person name="Liu S.-L."/>
        </authorList>
    </citation>
    <scope>NUCLEOTIDE SEQUENCE [LARGE SCALE GENOMIC DNA]</scope>
    <source>
        <strain>RKS4594</strain>
    </source>
</reference>
<protein>
    <recommendedName>
        <fullName evidence="1">Fructose-6-phosphate aldolase</fullName>
        <ecNumber evidence="1">4.1.2.-</ecNumber>
    </recommendedName>
</protein>